<dbReference type="EMBL" id="AL389890">
    <property type="protein sequence ID" value="CAB97291.2"/>
    <property type="molecule type" value="Genomic_DNA"/>
</dbReference>
<dbReference type="EMBL" id="CM002236">
    <property type="protein sequence ID" value="EAA36158.1"/>
    <property type="molecule type" value="Genomic_DNA"/>
</dbReference>
<dbReference type="PIR" id="T50971">
    <property type="entry name" value="T50971"/>
</dbReference>
<dbReference type="RefSeq" id="XP_965394.1">
    <property type="nucleotide sequence ID" value="XM_960301.2"/>
</dbReference>
<dbReference type="SMR" id="Q9P3Q9"/>
<dbReference type="FunCoup" id="Q9P3Q9">
    <property type="interactions" value="11"/>
</dbReference>
<dbReference type="STRING" id="367110.Q9P3Q9"/>
<dbReference type="PaxDb" id="5141-EFNCRP00000002409"/>
<dbReference type="EnsemblFungi" id="EAA36158">
    <property type="protein sequence ID" value="EAA36158"/>
    <property type="gene ID" value="NCU03008"/>
</dbReference>
<dbReference type="GeneID" id="3881544"/>
<dbReference type="KEGG" id="ncr:NCU03008"/>
<dbReference type="VEuPathDB" id="FungiDB:NCU03008"/>
<dbReference type="HOGENOM" id="CLU_147114_2_2_1"/>
<dbReference type="InParanoid" id="Q9P3Q9"/>
<dbReference type="OMA" id="KYKLRIH"/>
<dbReference type="OrthoDB" id="529194at2759"/>
<dbReference type="Proteomes" id="UP000001805">
    <property type="component" value="Chromosome 1, Linkage Group I"/>
</dbReference>
<dbReference type="GO" id="GO:0005759">
    <property type="term" value="C:mitochondrial matrix"/>
    <property type="evidence" value="ECO:0000318"/>
    <property type="project" value="GO_Central"/>
</dbReference>
<dbReference type="GO" id="GO:0044183">
    <property type="term" value="F:protein folding chaperone"/>
    <property type="evidence" value="ECO:0000318"/>
    <property type="project" value="GO_Central"/>
</dbReference>
<dbReference type="GO" id="GO:0034551">
    <property type="term" value="P:mitochondrial respiratory chain complex III assembly"/>
    <property type="evidence" value="ECO:0000318"/>
    <property type="project" value="GO_Central"/>
</dbReference>
<dbReference type="CDD" id="cd20267">
    <property type="entry name" value="Complex1_LYR_LYRM7"/>
    <property type="match status" value="1"/>
</dbReference>
<dbReference type="InterPro" id="IPR008011">
    <property type="entry name" value="Complex1_LYR_dom"/>
</dbReference>
<dbReference type="InterPro" id="IPR045298">
    <property type="entry name" value="Complex1_LYR_LYRM7"/>
</dbReference>
<dbReference type="InterPro" id="IPR050435">
    <property type="entry name" value="MZM1/LYRM7"/>
</dbReference>
<dbReference type="PANTHER" id="PTHR46749">
    <property type="entry name" value="COMPLEX III ASSEMBLY FACTOR LYRM7"/>
    <property type="match status" value="1"/>
</dbReference>
<dbReference type="PANTHER" id="PTHR46749:SF1">
    <property type="entry name" value="COMPLEX III ASSEMBLY FACTOR LYRM7"/>
    <property type="match status" value="1"/>
</dbReference>
<dbReference type="Pfam" id="PF05347">
    <property type="entry name" value="Complex1_LYR"/>
    <property type="match status" value="1"/>
</dbReference>
<feature type="transit peptide" description="Mitochondrion" evidence="2">
    <location>
        <begin position="1"/>
        <end status="unknown"/>
    </location>
</feature>
<feature type="chain" id="PRO_0000405501" description="Mitochondrial zinc maintenance protein 1, mitochondrial">
    <location>
        <begin status="unknown"/>
        <end position="111"/>
    </location>
</feature>
<accession>Q9P3Q9</accession>
<keyword id="KW-0143">Chaperone</keyword>
<keyword id="KW-0496">Mitochondrion</keyword>
<keyword id="KW-1185">Reference proteome</keyword>
<keyword id="KW-0809">Transit peptide</keyword>
<evidence type="ECO:0000250" key="1"/>
<evidence type="ECO:0000255" key="2"/>
<evidence type="ECO:0000305" key="3"/>
<gene>
    <name type="primary">mzm1</name>
    <name type="ORF">B24P7.260</name>
    <name type="ORF">NCU03008</name>
</gene>
<sequence length="111" mass="12318">MSALQAYRHLMRAARVAFDGDNRTLTAAYESIRRGFRENQNVPANDPTIAPAIAHAEEVASFLRSNVVQGRKDGETYKLRIHQDTERGDNDTIKLGNQTIKIGGEQKCCSA</sequence>
<reference key="1">
    <citation type="journal article" date="2003" name="Nucleic Acids Res.">
        <title>What's in the genome of a filamentous fungus? Analysis of the Neurospora genome sequence.</title>
        <authorList>
            <person name="Mannhaupt G."/>
            <person name="Montrone C."/>
            <person name="Haase D."/>
            <person name="Mewes H.-W."/>
            <person name="Aign V."/>
            <person name="Hoheisel J.D."/>
            <person name="Fartmann B."/>
            <person name="Nyakatura G."/>
            <person name="Kempken F."/>
            <person name="Maier J."/>
            <person name="Schulte U."/>
        </authorList>
    </citation>
    <scope>NUCLEOTIDE SEQUENCE [LARGE SCALE GENOMIC DNA]</scope>
    <source>
        <strain>ATCC 24698 / 74-OR23-1A / CBS 708.71 / DSM 1257 / FGSC 987</strain>
    </source>
</reference>
<reference key="2">
    <citation type="journal article" date="2003" name="Nature">
        <title>The genome sequence of the filamentous fungus Neurospora crassa.</title>
        <authorList>
            <person name="Galagan J.E."/>
            <person name="Calvo S.E."/>
            <person name="Borkovich K.A."/>
            <person name="Selker E.U."/>
            <person name="Read N.D."/>
            <person name="Jaffe D.B."/>
            <person name="FitzHugh W."/>
            <person name="Ma L.-J."/>
            <person name="Smirnov S."/>
            <person name="Purcell S."/>
            <person name="Rehman B."/>
            <person name="Elkins T."/>
            <person name="Engels R."/>
            <person name="Wang S."/>
            <person name="Nielsen C.B."/>
            <person name="Butler J."/>
            <person name="Endrizzi M."/>
            <person name="Qui D."/>
            <person name="Ianakiev P."/>
            <person name="Bell-Pedersen D."/>
            <person name="Nelson M.A."/>
            <person name="Werner-Washburne M."/>
            <person name="Selitrennikoff C.P."/>
            <person name="Kinsey J.A."/>
            <person name="Braun E.L."/>
            <person name="Zelter A."/>
            <person name="Schulte U."/>
            <person name="Kothe G.O."/>
            <person name="Jedd G."/>
            <person name="Mewes H.-W."/>
            <person name="Staben C."/>
            <person name="Marcotte E."/>
            <person name="Greenberg D."/>
            <person name="Roy A."/>
            <person name="Foley K."/>
            <person name="Naylor J."/>
            <person name="Stange-Thomann N."/>
            <person name="Barrett R."/>
            <person name="Gnerre S."/>
            <person name="Kamal M."/>
            <person name="Kamvysselis M."/>
            <person name="Mauceli E.W."/>
            <person name="Bielke C."/>
            <person name="Rudd S."/>
            <person name="Frishman D."/>
            <person name="Krystofova S."/>
            <person name="Rasmussen C."/>
            <person name="Metzenberg R.L."/>
            <person name="Perkins D.D."/>
            <person name="Kroken S."/>
            <person name="Cogoni C."/>
            <person name="Macino G."/>
            <person name="Catcheside D.E.A."/>
            <person name="Li W."/>
            <person name="Pratt R.J."/>
            <person name="Osmani S.A."/>
            <person name="DeSouza C.P.C."/>
            <person name="Glass N.L."/>
            <person name="Orbach M.J."/>
            <person name="Berglund J.A."/>
            <person name="Voelker R."/>
            <person name="Yarden O."/>
            <person name="Plamann M."/>
            <person name="Seiler S."/>
            <person name="Dunlap J.C."/>
            <person name="Radford A."/>
            <person name="Aramayo R."/>
            <person name="Natvig D.O."/>
            <person name="Alex L.A."/>
            <person name="Mannhaupt G."/>
            <person name="Ebbole D.J."/>
            <person name="Freitag M."/>
            <person name="Paulsen I."/>
            <person name="Sachs M.S."/>
            <person name="Lander E.S."/>
            <person name="Nusbaum C."/>
            <person name="Birren B.W."/>
        </authorList>
    </citation>
    <scope>NUCLEOTIDE SEQUENCE [LARGE SCALE GENOMIC DNA]</scope>
    <source>
        <strain>ATCC 24698 / 74-OR23-1A / CBS 708.71 / DSM 1257 / FGSC 987</strain>
    </source>
</reference>
<proteinExistence type="inferred from homology"/>
<organism>
    <name type="scientific">Neurospora crassa (strain ATCC 24698 / 74-OR23-1A / CBS 708.71 / DSM 1257 / FGSC 987)</name>
    <dbReference type="NCBI Taxonomy" id="367110"/>
    <lineage>
        <taxon>Eukaryota</taxon>
        <taxon>Fungi</taxon>
        <taxon>Dikarya</taxon>
        <taxon>Ascomycota</taxon>
        <taxon>Pezizomycotina</taxon>
        <taxon>Sordariomycetes</taxon>
        <taxon>Sordariomycetidae</taxon>
        <taxon>Sordariales</taxon>
        <taxon>Sordariaceae</taxon>
        <taxon>Neurospora</taxon>
    </lineage>
</organism>
<comment type="function">
    <text evidence="1">Assembly factor required for Rieske Fe-S protein RIP1 incorporation into the cytochrome b-c1 (CIII) complex. Functions as a chaperone, binding to this subunit within the mitochondrial matrix and stabilizing it prior to its translocation and insertion into the late CIII dimeric intermediate within the mitochondrial inner membrane. Modulates the mitochondrial matrix zinc pool (By similarity).</text>
</comment>
<comment type="subunit">
    <text evidence="1">Interacts with RIP1.</text>
</comment>
<comment type="subcellular location">
    <subcellularLocation>
        <location evidence="1">Mitochondrion matrix</location>
    </subcellularLocation>
</comment>
<comment type="similarity">
    <text evidence="3">Belongs to the complex I LYR family. MZM1 subfamily.</text>
</comment>
<name>MZM1_NEUCR</name>
<protein>
    <recommendedName>
        <fullName>Mitochondrial zinc maintenance protein 1, mitochondrial</fullName>
    </recommendedName>
</protein>